<dbReference type="EC" id="3.2.1.4"/>
<dbReference type="EMBL" id="AL162691">
    <property type="protein sequence ID" value="CAB83158.1"/>
    <property type="status" value="ALT_SEQ"/>
    <property type="molecule type" value="Genomic_DNA"/>
</dbReference>
<dbReference type="EMBL" id="CP002686">
    <property type="protein sequence ID" value="AEE77836.1"/>
    <property type="molecule type" value="Genomic_DNA"/>
</dbReference>
<dbReference type="EMBL" id="CP002686">
    <property type="protein sequence ID" value="ANM65868.1"/>
    <property type="molecule type" value="Genomic_DNA"/>
</dbReference>
<dbReference type="EMBL" id="AY072099">
    <property type="protein sequence ID" value="AAL59921.1"/>
    <property type="molecule type" value="mRNA"/>
</dbReference>
<dbReference type="PIR" id="T47422">
    <property type="entry name" value="T47422"/>
</dbReference>
<dbReference type="SMR" id="Q8VYG3"/>
<dbReference type="FunCoup" id="Q8VYG3">
    <property type="interactions" value="208"/>
</dbReference>
<dbReference type="STRING" id="3702.Q8VYG3"/>
<dbReference type="CAZy" id="GH9">
    <property type="family name" value="Glycoside Hydrolase Family 9"/>
</dbReference>
<dbReference type="GlyGen" id="Q8VYG3">
    <property type="glycosylation" value="1 site"/>
</dbReference>
<dbReference type="iPTMnet" id="Q8VYG3"/>
<dbReference type="PaxDb" id="3702-AT3G43860.1"/>
<dbReference type="ProteomicsDB" id="247315"/>
<dbReference type="EnsemblPlants" id="AT3G43860.1">
    <property type="protein sequence ID" value="AT3G43860.1"/>
    <property type="gene ID" value="AT3G43860"/>
</dbReference>
<dbReference type="EnsemblPlants" id="AT3G43860.2">
    <property type="protein sequence ID" value="AT3G43860.2"/>
    <property type="gene ID" value="AT3G43860"/>
</dbReference>
<dbReference type="Gramene" id="AT3G43860.1">
    <property type="protein sequence ID" value="AT3G43860.1"/>
    <property type="gene ID" value="AT3G43860"/>
</dbReference>
<dbReference type="Gramene" id="AT3G43860.2">
    <property type="protein sequence ID" value="AT3G43860.2"/>
    <property type="gene ID" value="AT3G43860"/>
</dbReference>
<dbReference type="KEGG" id="ath:AT3G43860"/>
<dbReference type="Araport" id="AT3G43860"/>
<dbReference type="TAIR" id="AT3G43860">
    <property type="gene designation" value="GH9A4"/>
</dbReference>
<dbReference type="eggNOG" id="ENOG502QQ06">
    <property type="taxonomic scope" value="Eukaryota"/>
</dbReference>
<dbReference type="HOGENOM" id="CLU_008926_1_4_1"/>
<dbReference type="InParanoid" id="Q8VYG3"/>
<dbReference type="OMA" id="PSWRGDS"/>
<dbReference type="PhylomeDB" id="Q8VYG3"/>
<dbReference type="BioCyc" id="ARA:AT3G43860-MONOMER"/>
<dbReference type="PRO" id="PR:Q8VYG3"/>
<dbReference type="Proteomes" id="UP000006548">
    <property type="component" value="Chromosome 3"/>
</dbReference>
<dbReference type="ExpressionAtlas" id="Q8VYG3">
    <property type="expression patterns" value="baseline and differential"/>
</dbReference>
<dbReference type="GO" id="GO:0005576">
    <property type="term" value="C:extracellular region"/>
    <property type="evidence" value="ECO:0007669"/>
    <property type="project" value="UniProtKB-SubCell"/>
</dbReference>
<dbReference type="GO" id="GO:0008810">
    <property type="term" value="F:cellulase activity"/>
    <property type="evidence" value="ECO:0007669"/>
    <property type="project" value="UniProtKB-EC"/>
</dbReference>
<dbReference type="GO" id="GO:0071555">
    <property type="term" value="P:cell wall organization"/>
    <property type="evidence" value="ECO:0007669"/>
    <property type="project" value="UniProtKB-KW"/>
</dbReference>
<dbReference type="GO" id="GO:0030245">
    <property type="term" value="P:cellulose catabolic process"/>
    <property type="evidence" value="ECO:0007669"/>
    <property type="project" value="UniProtKB-KW"/>
</dbReference>
<dbReference type="FunFam" id="1.50.10.10:FF:000020">
    <property type="entry name" value="Endoglucanase"/>
    <property type="match status" value="1"/>
</dbReference>
<dbReference type="Gene3D" id="1.50.10.10">
    <property type="match status" value="1"/>
</dbReference>
<dbReference type="InterPro" id="IPR008928">
    <property type="entry name" value="6-hairpin_glycosidase_sf"/>
</dbReference>
<dbReference type="InterPro" id="IPR012341">
    <property type="entry name" value="6hp_glycosidase-like_sf"/>
</dbReference>
<dbReference type="InterPro" id="IPR001701">
    <property type="entry name" value="Glyco_hydro_9"/>
</dbReference>
<dbReference type="InterPro" id="IPR018221">
    <property type="entry name" value="Glyco_hydro_9_His_AS"/>
</dbReference>
<dbReference type="PANTHER" id="PTHR22298">
    <property type="entry name" value="ENDO-1,4-BETA-GLUCANASE"/>
    <property type="match status" value="1"/>
</dbReference>
<dbReference type="Pfam" id="PF00759">
    <property type="entry name" value="Glyco_hydro_9"/>
    <property type="match status" value="1"/>
</dbReference>
<dbReference type="SUPFAM" id="SSF48208">
    <property type="entry name" value="Six-hairpin glycosidases"/>
    <property type="match status" value="1"/>
</dbReference>
<dbReference type="PROSITE" id="PS60032">
    <property type="entry name" value="GH9_1"/>
    <property type="match status" value="1"/>
</dbReference>
<dbReference type="PROSITE" id="PS00592">
    <property type="entry name" value="GH9_2"/>
    <property type="match status" value="1"/>
</dbReference>
<evidence type="ECO:0000250" key="1"/>
<evidence type="ECO:0000255" key="2"/>
<evidence type="ECO:0000255" key="3">
    <source>
        <dbReference type="PROSITE-ProRule" id="PRU10059"/>
    </source>
</evidence>
<evidence type="ECO:0000255" key="4">
    <source>
        <dbReference type="PROSITE-ProRule" id="PRU10140"/>
    </source>
</evidence>
<evidence type="ECO:0000305" key="5"/>
<name>GUN16_ARATH</name>
<gene>
    <name type="ordered locus">At3g43860</name>
    <name type="ORF">T28A8.150</name>
</gene>
<proteinExistence type="evidence at transcript level"/>
<accession>Q8VYG3</accession>
<accession>Q9LZG2</accession>
<protein>
    <recommendedName>
        <fullName>Endoglucanase 16</fullName>
        <ecNumber>3.2.1.4</ecNumber>
    </recommendedName>
    <alternativeName>
        <fullName>Endo-1,4-beta glucanase 16</fullName>
    </alternativeName>
</protein>
<keyword id="KW-0119">Carbohydrate metabolism</keyword>
<keyword id="KW-0961">Cell wall biogenesis/degradation</keyword>
<keyword id="KW-0136">Cellulose degradation</keyword>
<keyword id="KW-0325">Glycoprotein</keyword>
<keyword id="KW-0326">Glycosidase</keyword>
<keyword id="KW-0378">Hydrolase</keyword>
<keyword id="KW-0624">Polysaccharide degradation</keyword>
<keyword id="KW-1185">Reference proteome</keyword>
<keyword id="KW-0964">Secreted</keyword>
<keyword id="KW-0732">Signal</keyword>
<reference key="1">
    <citation type="journal article" date="2000" name="Nature">
        <title>Sequence and analysis of chromosome 3 of the plant Arabidopsis thaliana.</title>
        <authorList>
            <person name="Salanoubat M."/>
            <person name="Lemcke K."/>
            <person name="Rieger M."/>
            <person name="Ansorge W."/>
            <person name="Unseld M."/>
            <person name="Fartmann B."/>
            <person name="Valle G."/>
            <person name="Bloecker H."/>
            <person name="Perez-Alonso M."/>
            <person name="Obermaier B."/>
            <person name="Delseny M."/>
            <person name="Boutry M."/>
            <person name="Grivell L.A."/>
            <person name="Mache R."/>
            <person name="Puigdomenech P."/>
            <person name="De Simone V."/>
            <person name="Choisne N."/>
            <person name="Artiguenave F."/>
            <person name="Robert C."/>
            <person name="Brottier P."/>
            <person name="Wincker P."/>
            <person name="Cattolico L."/>
            <person name="Weissenbach J."/>
            <person name="Saurin W."/>
            <person name="Quetier F."/>
            <person name="Schaefer M."/>
            <person name="Mueller-Auer S."/>
            <person name="Gabel C."/>
            <person name="Fuchs M."/>
            <person name="Benes V."/>
            <person name="Wurmbach E."/>
            <person name="Drzonek H."/>
            <person name="Erfle H."/>
            <person name="Jordan N."/>
            <person name="Bangert S."/>
            <person name="Wiedelmann R."/>
            <person name="Kranz H."/>
            <person name="Voss H."/>
            <person name="Holland R."/>
            <person name="Brandt P."/>
            <person name="Nyakatura G."/>
            <person name="Vezzi A."/>
            <person name="D'Angelo M."/>
            <person name="Pallavicini A."/>
            <person name="Toppo S."/>
            <person name="Simionati B."/>
            <person name="Conrad A."/>
            <person name="Hornischer K."/>
            <person name="Kauer G."/>
            <person name="Loehnert T.-H."/>
            <person name="Nordsiek G."/>
            <person name="Reichelt J."/>
            <person name="Scharfe M."/>
            <person name="Schoen O."/>
            <person name="Bargues M."/>
            <person name="Terol J."/>
            <person name="Climent J."/>
            <person name="Navarro P."/>
            <person name="Collado C."/>
            <person name="Perez-Perez A."/>
            <person name="Ottenwaelder B."/>
            <person name="Duchemin D."/>
            <person name="Cooke R."/>
            <person name="Laudie M."/>
            <person name="Berger-Llauro C."/>
            <person name="Purnelle B."/>
            <person name="Masuy D."/>
            <person name="de Haan M."/>
            <person name="Maarse A.C."/>
            <person name="Alcaraz J.-P."/>
            <person name="Cottet A."/>
            <person name="Casacuberta E."/>
            <person name="Monfort A."/>
            <person name="Argiriou A."/>
            <person name="Flores M."/>
            <person name="Liguori R."/>
            <person name="Vitale D."/>
            <person name="Mannhaupt G."/>
            <person name="Haase D."/>
            <person name="Schoof H."/>
            <person name="Rudd S."/>
            <person name="Zaccaria P."/>
            <person name="Mewes H.-W."/>
            <person name="Mayer K.F.X."/>
            <person name="Kaul S."/>
            <person name="Town C.D."/>
            <person name="Koo H.L."/>
            <person name="Tallon L.J."/>
            <person name="Jenkins J."/>
            <person name="Rooney T."/>
            <person name="Rizzo M."/>
            <person name="Walts A."/>
            <person name="Utterback T."/>
            <person name="Fujii C.Y."/>
            <person name="Shea T.P."/>
            <person name="Creasy T.H."/>
            <person name="Haas B."/>
            <person name="Maiti R."/>
            <person name="Wu D."/>
            <person name="Peterson J."/>
            <person name="Van Aken S."/>
            <person name="Pai G."/>
            <person name="Militscher J."/>
            <person name="Sellers P."/>
            <person name="Gill J.E."/>
            <person name="Feldblyum T.V."/>
            <person name="Preuss D."/>
            <person name="Lin X."/>
            <person name="Nierman W.C."/>
            <person name="Salzberg S.L."/>
            <person name="White O."/>
            <person name="Venter J.C."/>
            <person name="Fraser C.M."/>
            <person name="Kaneko T."/>
            <person name="Nakamura Y."/>
            <person name="Sato S."/>
            <person name="Kato T."/>
            <person name="Asamizu E."/>
            <person name="Sasamoto S."/>
            <person name="Kimura T."/>
            <person name="Idesawa K."/>
            <person name="Kawashima K."/>
            <person name="Kishida Y."/>
            <person name="Kiyokawa C."/>
            <person name="Kohara M."/>
            <person name="Matsumoto M."/>
            <person name="Matsuno A."/>
            <person name="Muraki A."/>
            <person name="Nakayama S."/>
            <person name="Nakazaki N."/>
            <person name="Shinpo S."/>
            <person name="Takeuchi C."/>
            <person name="Wada T."/>
            <person name="Watanabe A."/>
            <person name="Yamada M."/>
            <person name="Yasuda M."/>
            <person name="Tabata S."/>
        </authorList>
    </citation>
    <scope>NUCLEOTIDE SEQUENCE [LARGE SCALE GENOMIC DNA]</scope>
    <source>
        <strain>cv. Columbia</strain>
    </source>
</reference>
<reference key="2">
    <citation type="journal article" date="2017" name="Plant J.">
        <title>Araport11: a complete reannotation of the Arabidopsis thaliana reference genome.</title>
        <authorList>
            <person name="Cheng C.Y."/>
            <person name="Krishnakumar V."/>
            <person name="Chan A.P."/>
            <person name="Thibaud-Nissen F."/>
            <person name="Schobel S."/>
            <person name="Town C.D."/>
        </authorList>
    </citation>
    <scope>GENOME REANNOTATION</scope>
    <source>
        <strain>cv. Columbia</strain>
    </source>
</reference>
<reference key="3">
    <citation type="journal article" date="2003" name="Science">
        <title>Empirical analysis of transcriptional activity in the Arabidopsis genome.</title>
        <authorList>
            <person name="Yamada K."/>
            <person name="Lim J."/>
            <person name="Dale J.M."/>
            <person name="Chen H."/>
            <person name="Shinn P."/>
            <person name="Palm C.J."/>
            <person name="Southwick A.M."/>
            <person name="Wu H.C."/>
            <person name="Kim C.J."/>
            <person name="Nguyen M."/>
            <person name="Pham P.K."/>
            <person name="Cheuk R.F."/>
            <person name="Karlin-Newmann G."/>
            <person name="Liu S.X."/>
            <person name="Lam B."/>
            <person name="Sakano H."/>
            <person name="Wu T."/>
            <person name="Yu G."/>
            <person name="Miranda M."/>
            <person name="Quach H.L."/>
            <person name="Tripp M."/>
            <person name="Chang C.H."/>
            <person name="Lee J.M."/>
            <person name="Toriumi M.J."/>
            <person name="Chan M.M."/>
            <person name="Tang C.C."/>
            <person name="Onodera C.S."/>
            <person name="Deng J.M."/>
            <person name="Akiyama K."/>
            <person name="Ansari Y."/>
            <person name="Arakawa T."/>
            <person name="Banh J."/>
            <person name="Banno F."/>
            <person name="Bowser L."/>
            <person name="Brooks S.Y."/>
            <person name="Carninci P."/>
            <person name="Chao Q."/>
            <person name="Choy N."/>
            <person name="Enju A."/>
            <person name="Goldsmith A.D."/>
            <person name="Gurjal M."/>
            <person name="Hansen N.F."/>
            <person name="Hayashizaki Y."/>
            <person name="Johnson-Hopson C."/>
            <person name="Hsuan V.W."/>
            <person name="Iida K."/>
            <person name="Karnes M."/>
            <person name="Khan S."/>
            <person name="Koesema E."/>
            <person name="Ishida J."/>
            <person name="Jiang P.X."/>
            <person name="Jones T."/>
            <person name="Kawai J."/>
            <person name="Kamiya A."/>
            <person name="Meyers C."/>
            <person name="Nakajima M."/>
            <person name="Narusaka M."/>
            <person name="Seki M."/>
            <person name="Sakurai T."/>
            <person name="Satou M."/>
            <person name="Tamse R."/>
            <person name="Vaysberg M."/>
            <person name="Wallender E.K."/>
            <person name="Wong C."/>
            <person name="Yamamura Y."/>
            <person name="Yuan S."/>
            <person name="Shinozaki K."/>
            <person name="Davis R.W."/>
            <person name="Theologis A."/>
            <person name="Ecker J.R."/>
        </authorList>
    </citation>
    <scope>NUCLEOTIDE SEQUENCE [LARGE SCALE MRNA]</scope>
    <source>
        <strain>cv. Columbia</strain>
    </source>
</reference>
<reference key="4">
    <citation type="journal article" date="2004" name="J. Mol. Evol.">
        <title>Phylogenetic analysis of the plant endo-beta-1,4-glucanase gene family.</title>
        <authorList>
            <person name="Libertini E."/>
            <person name="Li Y."/>
            <person name="McQueen-Mason S.J."/>
        </authorList>
    </citation>
    <scope>GENE FAMILY</scope>
</reference>
<organism>
    <name type="scientific">Arabidopsis thaliana</name>
    <name type="common">Mouse-ear cress</name>
    <dbReference type="NCBI Taxonomy" id="3702"/>
    <lineage>
        <taxon>Eukaryota</taxon>
        <taxon>Viridiplantae</taxon>
        <taxon>Streptophyta</taxon>
        <taxon>Embryophyta</taxon>
        <taxon>Tracheophyta</taxon>
        <taxon>Spermatophyta</taxon>
        <taxon>Magnoliopsida</taxon>
        <taxon>eudicotyledons</taxon>
        <taxon>Gunneridae</taxon>
        <taxon>Pentapetalae</taxon>
        <taxon>rosids</taxon>
        <taxon>malvids</taxon>
        <taxon>Brassicales</taxon>
        <taxon>Brassicaceae</taxon>
        <taxon>Camelineae</taxon>
        <taxon>Arabidopsis</taxon>
    </lineage>
</organism>
<feature type="signal peptide" evidence="2">
    <location>
        <begin position="1"/>
        <end position="30"/>
    </location>
</feature>
<feature type="chain" id="PRO_0000249268" description="Endoglucanase 16">
    <location>
        <begin position="31"/>
        <end position="486"/>
    </location>
</feature>
<feature type="active site" description="Nucleophile" evidence="4">
    <location>
        <position position="87"/>
    </location>
</feature>
<feature type="active site" evidence="3">
    <location>
        <position position="407"/>
    </location>
</feature>
<feature type="active site" evidence="1">
    <location>
        <position position="458"/>
    </location>
</feature>
<feature type="active site" evidence="1">
    <location>
        <position position="467"/>
    </location>
</feature>
<feature type="glycosylation site" description="N-linked (GlcNAc...) asparagine" evidence="2">
    <location>
        <position position="29"/>
    </location>
</feature>
<sequence length="486" mass="54120">MANYKGRGNVMIRSMLLGLYGIINIVCVNGTFINYKDALTKSLIFLEAQRSGKLPPNNRVPWRGDSALDDGKLVNVDLSGGYYDAGDNVKYGLPMAFTITTLAWSTITYEKELRATGELENARAAIRWGTDYFLKCASRKNRLYVQVGDPNADHQCWARPENMKTPRTVLEISDKVPGTEIAAEAAAAFAASSIVFRHVDHKYARRLLNKAKLLFKLAKSHKGTYDGECPFYCSNSGYNDELIWAATWLYKATRNHLYLSYLKFEAISAYVAEFSWDLKYAGAQILITKLIFEGHKGLDLYKQQADSFVCSNLPGSPYHQVFTTPGGMIHLRDGANSQYVTATAFLFSAYADILQKHNQKISCGSHQFDSTHLMAFAKKQIDYILGHNPQGRSYMVGFGPNPPKQAHHRGASVPMHEANAPLSCPLSFVKWYNKNVPNANELTGAILGGPDRQDKFQDLRWTSVYTEPCTYINSIAVGVLAKLAAA</sequence>
<comment type="catalytic activity">
    <reaction>
        <text>Endohydrolysis of (1-&gt;4)-beta-D-glucosidic linkages in cellulose, lichenin and cereal beta-D-glucans.</text>
        <dbReference type="EC" id="3.2.1.4"/>
    </reaction>
</comment>
<comment type="subcellular location">
    <subcellularLocation>
        <location evidence="1">Secreted</location>
    </subcellularLocation>
</comment>
<comment type="similarity">
    <text evidence="4 5">Belongs to the glycosyl hydrolase 9 (cellulase E) family.</text>
</comment>
<comment type="sequence caution" evidence="5">
    <conflict type="erroneous gene model prediction">
        <sequence resource="EMBL-CDS" id="CAB83158"/>
    </conflict>
</comment>